<feature type="chain" id="PRO_0000080949" description="FYVE, RhoGEF and PH domain-containing protein 4">
    <location>
        <begin position="1"/>
        <end position="766"/>
    </location>
</feature>
<feature type="domain" description="DH" evidence="3">
    <location>
        <begin position="206"/>
        <end position="393"/>
    </location>
</feature>
<feature type="domain" description="PH 1" evidence="5">
    <location>
        <begin position="422"/>
        <end position="521"/>
    </location>
</feature>
<feature type="domain" description="PH 2" evidence="5">
    <location>
        <begin position="643"/>
        <end position="740"/>
    </location>
</feature>
<feature type="zinc finger region" description="FYVE-type" evidence="4">
    <location>
        <begin position="559"/>
        <end position="619"/>
    </location>
</feature>
<feature type="region of interest" description="Actin filament-binding">
    <location>
        <begin position="1"/>
        <end position="150"/>
    </location>
</feature>
<feature type="region of interest" description="Disordered" evidence="6">
    <location>
        <begin position="43"/>
        <end position="167"/>
    </location>
</feature>
<feature type="region of interest" description="Disordered" evidence="6">
    <location>
        <begin position="745"/>
        <end position="766"/>
    </location>
</feature>
<feature type="compositionally biased region" description="Polar residues" evidence="6">
    <location>
        <begin position="43"/>
        <end position="65"/>
    </location>
</feature>
<feature type="compositionally biased region" description="Polar residues" evidence="6">
    <location>
        <begin position="132"/>
        <end position="145"/>
    </location>
</feature>
<feature type="compositionally biased region" description="Polar residues" evidence="6">
    <location>
        <begin position="152"/>
        <end position="161"/>
    </location>
</feature>
<feature type="binding site" evidence="4">
    <location>
        <position position="565"/>
    </location>
    <ligand>
        <name>Zn(2+)</name>
        <dbReference type="ChEBI" id="CHEBI:29105"/>
        <label>1</label>
    </ligand>
</feature>
<feature type="binding site" evidence="4">
    <location>
        <position position="568"/>
    </location>
    <ligand>
        <name>Zn(2+)</name>
        <dbReference type="ChEBI" id="CHEBI:29105"/>
        <label>1</label>
    </ligand>
</feature>
<feature type="binding site" evidence="4">
    <location>
        <position position="582"/>
    </location>
    <ligand>
        <name>Zn(2+)</name>
        <dbReference type="ChEBI" id="CHEBI:29105"/>
        <label>2</label>
    </ligand>
</feature>
<feature type="binding site" evidence="4">
    <location>
        <position position="585"/>
    </location>
    <ligand>
        <name>Zn(2+)</name>
        <dbReference type="ChEBI" id="CHEBI:29105"/>
        <label>2</label>
    </ligand>
</feature>
<feature type="binding site" evidence="4">
    <location>
        <position position="590"/>
    </location>
    <ligand>
        <name>Zn(2+)</name>
        <dbReference type="ChEBI" id="CHEBI:29105"/>
        <label>1</label>
    </ligand>
</feature>
<feature type="binding site" evidence="4">
    <location>
        <position position="593"/>
    </location>
    <ligand>
        <name>Zn(2+)</name>
        <dbReference type="ChEBI" id="CHEBI:29105"/>
        <label>1</label>
    </ligand>
</feature>
<feature type="binding site" evidence="4">
    <location>
        <position position="611"/>
    </location>
    <ligand>
        <name>Zn(2+)</name>
        <dbReference type="ChEBI" id="CHEBI:29105"/>
        <label>2</label>
    </ligand>
</feature>
<feature type="binding site" evidence="4">
    <location>
        <position position="614"/>
    </location>
    <ligand>
        <name>Zn(2+)</name>
        <dbReference type="ChEBI" id="CHEBI:29105"/>
        <label>2</label>
    </ligand>
</feature>
<feature type="modified residue" description="Phosphoserine" evidence="2">
    <location>
        <position position="702"/>
    </location>
</feature>
<feature type="modified residue" description="Phosphoserine" evidence="1">
    <location>
        <position position="716"/>
    </location>
</feature>
<evidence type="ECO:0000250" key="1">
    <source>
        <dbReference type="UniProtKB" id="Q91ZT5"/>
    </source>
</evidence>
<evidence type="ECO:0000250" key="2">
    <source>
        <dbReference type="UniProtKB" id="Q96M96"/>
    </source>
</evidence>
<evidence type="ECO:0000255" key="3">
    <source>
        <dbReference type="PROSITE-ProRule" id="PRU00062"/>
    </source>
</evidence>
<evidence type="ECO:0000255" key="4">
    <source>
        <dbReference type="PROSITE-ProRule" id="PRU00091"/>
    </source>
</evidence>
<evidence type="ECO:0000255" key="5">
    <source>
        <dbReference type="PROSITE-ProRule" id="PRU00145"/>
    </source>
</evidence>
<evidence type="ECO:0000256" key="6">
    <source>
        <dbReference type="SAM" id="MobiDB-lite"/>
    </source>
</evidence>
<evidence type="ECO:0000269" key="7">
    <source>
    </source>
</evidence>
<evidence type="ECO:0000269" key="8">
    <source>
    </source>
</evidence>
<gene>
    <name type="primary">Fgd4</name>
</gene>
<keyword id="KW-0009">Actin-binding</keyword>
<keyword id="KW-0966">Cell projection</keyword>
<keyword id="KW-0963">Cytoplasm</keyword>
<keyword id="KW-0206">Cytoskeleton</keyword>
<keyword id="KW-0903">Direct protein sequencing</keyword>
<keyword id="KW-0344">Guanine-nucleotide releasing factor</keyword>
<keyword id="KW-0479">Metal-binding</keyword>
<keyword id="KW-0597">Phosphoprotein</keyword>
<keyword id="KW-1185">Reference proteome</keyword>
<keyword id="KW-0677">Repeat</keyword>
<keyword id="KW-0862">Zinc</keyword>
<keyword id="KW-0863">Zinc-finger</keyword>
<protein>
    <recommendedName>
        <fullName>FYVE, RhoGEF and PH domain-containing protein 4</fullName>
    </recommendedName>
    <alternativeName>
        <fullName>Actin filament-binding protein frabin</fullName>
    </alternativeName>
    <alternativeName>
        <fullName>FGD1-related F-actin-binding protein</fullName>
    </alternativeName>
</protein>
<sequence length="766" mass="86454">MEESNPAPTSCASKGKHSKVSDLISHFEGGSVLSSYTDVQKDSTMNLNIPQTPRQHGLTSTTPQKLPSHKSPQKQEKDSDQNQGQHGCLANGVAAAQSQMECETEKEAALSPETDTQTAAASPDAHVLNGVRNETTTDSASSVTNSHDENACDSSCRTQGTDLGLPSKEGEPVIEAELQERENGLSTEGLNPLDQHHEVKETNEQKLHKIATELLLTERAYVSRLNLLDQVFYCKLLEEANRGSFPAEMVNKIFSNISSINAFHSKFLLPELEKRMQEWETTPRIGDILQKLAPFLKMYGEYVKGFDNAVELVKNMTERVPQFKSVTEEIQKQKICGSLTLQHHMLEPIQRIPRYEMLLKDYLKKLSPDAPDWNDAKKSLEIISTAASHSNSAIRKMENLKKLLEIYEMLGEEEDIVNPSNELIKEGQILKLAARNTSAQERYLFLFNNMLLYCVPRFSLVGSKFTVRTRVGIDGMKIVETHNEEYPHTFQVSGKERTLELQASSEQDKEEWIKALQESIDAFHQRHETFRNAIAKENDIPLEVSTAELGKRAPRWIRDNEVTMCMKCKESFNALTRRRHHCRACGHVVCWKCSDYKAQLEYDGGRLNKVCKDCYQIMSGFAESEEKKRRGILEIESAEVSGNSEVCSFLQYMEKSKPWQKIWCVIPKQDPLVLYMYGAPQDVRAQATIPLLGYIVDDMPKSADLPHSFKLTQSKSVHSFAADSEELKQKWLKIILLAVTGETPDGPSEHLDTLDNLPGPKEKSEC</sequence>
<dbReference type="EMBL" id="AF038388">
    <property type="protein sequence ID" value="AAC27698.1"/>
    <property type="molecule type" value="mRNA"/>
</dbReference>
<dbReference type="RefSeq" id="NP_001401984.1">
    <property type="nucleotide sequence ID" value="NM_001415055.1"/>
</dbReference>
<dbReference type="RefSeq" id="NP_640356.1">
    <property type="nucleotide sequence ID" value="NM_139263.1"/>
</dbReference>
<dbReference type="RefSeq" id="XP_038943912.1">
    <property type="nucleotide sequence ID" value="XM_039087984.2"/>
</dbReference>
<dbReference type="SMR" id="O88387"/>
<dbReference type="FunCoup" id="O88387">
    <property type="interactions" value="1108"/>
</dbReference>
<dbReference type="STRING" id="10116.ENSRNOP00000074767"/>
<dbReference type="PhosphoSitePlus" id="O88387"/>
<dbReference type="PaxDb" id="10116-ENSRNOP00000002491"/>
<dbReference type="Ensembl" id="ENSRNOT00000084177.2">
    <property type="protein sequence ID" value="ENSRNOP00000074767.2"/>
    <property type="gene ID" value="ENSRNOG00000059491.2"/>
</dbReference>
<dbReference type="GeneID" id="246174"/>
<dbReference type="AGR" id="RGD:708357"/>
<dbReference type="RGD" id="708357">
    <property type="gene designation" value="Fgd4"/>
</dbReference>
<dbReference type="eggNOG" id="KOG4424">
    <property type="taxonomic scope" value="Eukaryota"/>
</dbReference>
<dbReference type="GeneTree" id="ENSGT00940000155765"/>
<dbReference type="InParanoid" id="O88387"/>
<dbReference type="PhylomeDB" id="O88387"/>
<dbReference type="Reactome" id="R-RNO-193648">
    <property type="pathway name" value="NRAGE signals death through JNK"/>
</dbReference>
<dbReference type="Reactome" id="R-RNO-416482">
    <property type="pathway name" value="G alpha (12/13) signalling events"/>
</dbReference>
<dbReference type="Reactome" id="R-RNO-9013148">
    <property type="pathway name" value="CDC42 GTPase cycle"/>
</dbReference>
<dbReference type="PRO" id="PR:O88387"/>
<dbReference type="Proteomes" id="UP000002494">
    <property type="component" value="Chromosome 11"/>
</dbReference>
<dbReference type="GO" id="GO:0005737">
    <property type="term" value="C:cytoplasm"/>
    <property type="evidence" value="ECO:0000318"/>
    <property type="project" value="GO_Central"/>
</dbReference>
<dbReference type="GO" id="GO:0005856">
    <property type="term" value="C:cytoskeleton"/>
    <property type="evidence" value="ECO:0007669"/>
    <property type="project" value="UniProtKB-SubCell"/>
</dbReference>
<dbReference type="GO" id="GO:0030175">
    <property type="term" value="C:filopodium"/>
    <property type="evidence" value="ECO:0000266"/>
    <property type="project" value="RGD"/>
</dbReference>
<dbReference type="GO" id="GO:0030027">
    <property type="term" value="C:lamellipodium"/>
    <property type="evidence" value="ECO:0000266"/>
    <property type="project" value="RGD"/>
</dbReference>
<dbReference type="GO" id="GO:0003779">
    <property type="term" value="F:actin binding"/>
    <property type="evidence" value="ECO:0000314"/>
    <property type="project" value="MGI"/>
</dbReference>
<dbReference type="GO" id="GO:0051015">
    <property type="term" value="F:actin filament binding"/>
    <property type="evidence" value="ECO:0000315"/>
    <property type="project" value="RGD"/>
</dbReference>
<dbReference type="GO" id="GO:0005085">
    <property type="term" value="F:guanyl-nucleotide exchange factor activity"/>
    <property type="evidence" value="ECO:0000318"/>
    <property type="project" value="GO_Central"/>
</dbReference>
<dbReference type="GO" id="GO:0008270">
    <property type="term" value="F:zinc ion binding"/>
    <property type="evidence" value="ECO:0007669"/>
    <property type="project" value="UniProtKB-KW"/>
</dbReference>
<dbReference type="GO" id="GO:0007010">
    <property type="term" value="P:cytoskeleton organization"/>
    <property type="evidence" value="ECO:0000318"/>
    <property type="project" value="GO_Central"/>
</dbReference>
<dbReference type="GO" id="GO:0046847">
    <property type="term" value="P:filopodium assembly"/>
    <property type="evidence" value="ECO:0000318"/>
    <property type="project" value="GO_Central"/>
</dbReference>
<dbReference type="GO" id="GO:0030032">
    <property type="term" value="P:lamellipodium assembly"/>
    <property type="evidence" value="ECO:0000266"/>
    <property type="project" value="RGD"/>
</dbReference>
<dbReference type="GO" id="GO:0030035">
    <property type="term" value="P:microspike assembly"/>
    <property type="evidence" value="ECO:0000266"/>
    <property type="project" value="RGD"/>
</dbReference>
<dbReference type="GO" id="GO:0046330">
    <property type="term" value="P:positive regulation of JNK cascade"/>
    <property type="evidence" value="ECO:0000315"/>
    <property type="project" value="RGD"/>
</dbReference>
<dbReference type="GO" id="GO:0043507">
    <property type="term" value="P:positive regulation of JUN kinase activity"/>
    <property type="evidence" value="ECO:0000314"/>
    <property type="project" value="MGI"/>
</dbReference>
<dbReference type="GO" id="GO:0008360">
    <property type="term" value="P:regulation of cell shape"/>
    <property type="evidence" value="ECO:0000315"/>
    <property type="project" value="RGD"/>
</dbReference>
<dbReference type="CDD" id="cd15741">
    <property type="entry name" value="FYVE_FGD1_2_4"/>
    <property type="match status" value="1"/>
</dbReference>
<dbReference type="CDD" id="cd15791">
    <property type="entry name" value="PH1_FDG4"/>
    <property type="match status" value="1"/>
</dbReference>
<dbReference type="CDD" id="cd13236">
    <property type="entry name" value="PH2_FGD1-4"/>
    <property type="match status" value="1"/>
</dbReference>
<dbReference type="CDD" id="cd00160">
    <property type="entry name" value="RhoGEF"/>
    <property type="match status" value="1"/>
</dbReference>
<dbReference type="FunFam" id="3.30.40.10:FF:000061">
    <property type="entry name" value="FYVE, RhoGEF and PH domain containing 1"/>
    <property type="match status" value="1"/>
</dbReference>
<dbReference type="FunFam" id="1.20.900.10:FF:000013">
    <property type="entry name" value="FYVE, RhoGEF and PH domain-containing protein 4"/>
    <property type="match status" value="1"/>
</dbReference>
<dbReference type="FunFam" id="2.30.29.30:FF:000102">
    <property type="entry name" value="FYVE, RhoGEF and PH domain-containing protein 4"/>
    <property type="match status" value="1"/>
</dbReference>
<dbReference type="FunFam" id="2.30.29.30:FF:000113">
    <property type="entry name" value="FYVE, RhoGEF and PH domain-containing protein 4"/>
    <property type="match status" value="1"/>
</dbReference>
<dbReference type="Gene3D" id="1.20.900.10">
    <property type="entry name" value="Dbl homology (DH) domain"/>
    <property type="match status" value="1"/>
</dbReference>
<dbReference type="Gene3D" id="2.30.29.30">
    <property type="entry name" value="Pleckstrin-homology domain (PH domain)/Phosphotyrosine-binding domain (PTB)"/>
    <property type="match status" value="2"/>
</dbReference>
<dbReference type="Gene3D" id="3.30.40.10">
    <property type="entry name" value="Zinc/RING finger domain, C3HC4 (zinc finger)"/>
    <property type="match status" value="1"/>
</dbReference>
<dbReference type="InterPro" id="IPR035899">
    <property type="entry name" value="DBL_dom_sf"/>
</dbReference>
<dbReference type="InterPro" id="IPR000219">
    <property type="entry name" value="DH_dom"/>
</dbReference>
<dbReference type="InterPro" id="IPR037742">
    <property type="entry name" value="FDG4_N_PH"/>
</dbReference>
<dbReference type="InterPro" id="IPR035941">
    <property type="entry name" value="FGD1-4_PH2"/>
</dbReference>
<dbReference type="InterPro" id="IPR051092">
    <property type="entry name" value="FYVE_RhoGEF_PH"/>
</dbReference>
<dbReference type="InterPro" id="IPR011993">
    <property type="entry name" value="PH-like_dom_sf"/>
</dbReference>
<dbReference type="InterPro" id="IPR001849">
    <property type="entry name" value="PH_domain"/>
</dbReference>
<dbReference type="InterPro" id="IPR000306">
    <property type="entry name" value="Znf_FYVE"/>
</dbReference>
<dbReference type="InterPro" id="IPR017455">
    <property type="entry name" value="Znf_FYVE-rel"/>
</dbReference>
<dbReference type="InterPro" id="IPR013083">
    <property type="entry name" value="Znf_RING/FYVE/PHD"/>
</dbReference>
<dbReference type="PANTHER" id="PTHR12673">
    <property type="entry name" value="FACIOGENITAL DYSPLASIA PROTEIN"/>
    <property type="match status" value="1"/>
</dbReference>
<dbReference type="PANTHER" id="PTHR12673:SF98">
    <property type="entry name" value="FYVE, RHOGEF AND PH DOMAIN-CONTAINING PROTEIN 4"/>
    <property type="match status" value="1"/>
</dbReference>
<dbReference type="Pfam" id="PF01363">
    <property type="entry name" value="FYVE"/>
    <property type="match status" value="1"/>
</dbReference>
<dbReference type="Pfam" id="PF00169">
    <property type="entry name" value="PH"/>
    <property type="match status" value="2"/>
</dbReference>
<dbReference type="Pfam" id="PF00621">
    <property type="entry name" value="RhoGEF"/>
    <property type="match status" value="1"/>
</dbReference>
<dbReference type="SMART" id="SM00064">
    <property type="entry name" value="FYVE"/>
    <property type="match status" value="1"/>
</dbReference>
<dbReference type="SMART" id="SM00233">
    <property type="entry name" value="PH"/>
    <property type="match status" value="2"/>
</dbReference>
<dbReference type="SMART" id="SM00325">
    <property type="entry name" value="RhoGEF"/>
    <property type="match status" value="1"/>
</dbReference>
<dbReference type="SUPFAM" id="SSF48065">
    <property type="entry name" value="DBL homology domain (DH-domain)"/>
    <property type="match status" value="1"/>
</dbReference>
<dbReference type="SUPFAM" id="SSF50729">
    <property type="entry name" value="PH domain-like"/>
    <property type="match status" value="2"/>
</dbReference>
<dbReference type="PROSITE" id="PS50010">
    <property type="entry name" value="DH_2"/>
    <property type="match status" value="1"/>
</dbReference>
<dbReference type="PROSITE" id="PS50003">
    <property type="entry name" value="PH_DOMAIN"/>
    <property type="match status" value="2"/>
</dbReference>
<dbReference type="PROSITE" id="PS50178">
    <property type="entry name" value="ZF_FYVE"/>
    <property type="match status" value="1"/>
</dbReference>
<comment type="function">
    <text evidence="7 8">Activates CDC42, a member of the Ras-like family of Rho- and Rac proteins, by exchanging bound GDP for free GTP. Plays a role in regulating the actin cytoskeleton and cell shape. Activates MAPK8.</text>
</comment>
<comment type="subunit">
    <text>Homooligomer.</text>
</comment>
<comment type="subcellular location">
    <subcellularLocation>
        <location evidence="7">Cytoplasm</location>
        <location evidence="7">Cytoskeleton</location>
    </subcellularLocation>
    <subcellularLocation>
        <location evidence="7">Cell projection</location>
        <location evidence="7">Filopodium</location>
    </subcellularLocation>
    <text>Concentrated in filopodia and poorly detected at lamellipodia. Binds along the sides of actin fibers.</text>
</comment>
<comment type="tissue specificity">
    <text evidence="7">Detected in brain, lung, liver, skeletal muscle, kidney, testis and cultured hippocampal neurons.</text>
</comment>
<comment type="domain">
    <text>The part of the protein spanning the actin filament-binding domain together with the DH domain and the first PH domain is necessary and sufficient for microspike formation. Activation of MAPK8 requires the presence of all domains with the exception of the actin filament-binding domain.</text>
</comment>
<proteinExistence type="evidence at protein level"/>
<reference key="1">
    <citation type="journal article" date="1998" name="J. Biol. Chem.">
        <title>Frabin, a novel FGD1-related actin filament-binding protein capable of changing cell shape and activating c-Jun N-terminal kinase.</title>
        <authorList>
            <person name="Obaishi H."/>
            <person name="Nakanishi H."/>
            <person name="Mandai K."/>
            <person name="Satoh K."/>
            <person name="Satoh A."/>
            <person name="Takahashi K."/>
            <person name="Miyahara M."/>
            <person name="Nishioka H."/>
            <person name="Takaishi K."/>
            <person name="Takai Y."/>
        </authorList>
    </citation>
    <scope>NUCLEOTIDE SEQUENCE [MRNA]</scope>
    <scope>PROTEIN SEQUENCE OF 41-65; 236-252; 276-291; 365-396; 464-475; 478-493; 496-503; 510-551; 702-710 AND 716-428</scope>
    <scope>HOMOOLIGOMERIZATION</scope>
    <scope>FUNCTION</scope>
    <source>
        <tissue>Brain</tissue>
    </source>
</reference>
<reference key="2">
    <citation type="journal article" date="1999" name="J. Biol. Chem.">
        <title>Association of frabin with the actin cytoskeleton is essential for microspike formation through activation of Cdc42 small G protein.</title>
        <authorList>
            <person name="Umikawa M."/>
            <person name="Obaishi H."/>
            <person name="Nakanishi H."/>
            <person name="Satoh-Horikawa K."/>
            <person name="Takahashi K."/>
            <person name="Hotta I."/>
            <person name="Matsuura Y."/>
            <person name="Takai Y."/>
        </authorList>
    </citation>
    <scope>FUNCTION</scope>
    <scope>ACTIN FIBER-BINDING DOMAIN</scope>
    <scope>SUBCELLULAR LOCATION</scope>
    <scope>TISSUE SPECIFICITY</scope>
</reference>
<accession>O88387</accession>
<name>FGD4_RAT</name>
<organism>
    <name type="scientific">Rattus norvegicus</name>
    <name type="common">Rat</name>
    <dbReference type="NCBI Taxonomy" id="10116"/>
    <lineage>
        <taxon>Eukaryota</taxon>
        <taxon>Metazoa</taxon>
        <taxon>Chordata</taxon>
        <taxon>Craniata</taxon>
        <taxon>Vertebrata</taxon>
        <taxon>Euteleostomi</taxon>
        <taxon>Mammalia</taxon>
        <taxon>Eutheria</taxon>
        <taxon>Euarchontoglires</taxon>
        <taxon>Glires</taxon>
        <taxon>Rodentia</taxon>
        <taxon>Myomorpha</taxon>
        <taxon>Muroidea</taxon>
        <taxon>Muridae</taxon>
        <taxon>Murinae</taxon>
        <taxon>Rattus</taxon>
    </lineage>
</organism>